<organism>
    <name type="scientific">Christiangramia forsetii (strain DSM 17595 / CGMCC 1.15422 / KT0803)</name>
    <name type="common">Gramella forsetii</name>
    <dbReference type="NCBI Taxonomy" id="411154"/>
    <lineage>
        <taxon>Bacteria</taxon>
        <taxon>Pseudomonadati</taxon>
        <taxon>Bacteroidota</taxon>
        <taxon>Flavobacteriia</taxon>
        <taxon>Flavobacteriales</taxon>
        <taxon>Flavobacteriaceae</taxon>
        <taxon>Christiangramia</taxon>
    </lineage>
</organism>
<accession>A0LXV8</accession>
<comment type="function">
    <text evidence="1">Involved in the regulation of the intracellular balance of NAD and NADP, and is a key enzyme in the biosynthesis of NADP. Catalyzes specifically the phosphorylation on 2'-hydroxyl of the adenosine moiety of NAD to yield NADP.</text>
</comment>
<comment type="catalytic activity">
    <reaction evidence="1">
        <text>NAD(+) + ATP = ADP + NADP(+) + H(+)</text>
        <dbReference type="Rhea" id="RHEA:18629"/>
        <dbReference type="ChEBI" id="CHEBI:15378"/>
        <dbReference type="ChEBI" id="CHEBI:30616"/>
        <dbReference type="ChEBI" id="CHEBI:57540"/>
        <dbReference type="ChEBI" id="CHEBI:58349"/>
        <dbReference type="ChEBI" id="CHEBI:456216"/>
        <dbReference type="EC" id="2.7.1.23"/>
    </reaction>
</comment>
<comment type="cofactor">
    <cofactor evidence="1">
        <name>a divalent metal cation</name>
        <dbReference type="ChEBI" id="CHEBI:60240"/>
    </cofactor>
</comment>
<comment type="subcellular location">
    <subcellularLocation>
        <location evidence="1">Cytoplasm</location>
    </subcellularLocation>
</comment>
<comment type="similarity">
    <text evidence="1">Belongs to the NAD kinase family.</text>
</comment>
<protein>
    <recommendedName>
        <fullName evidence="1">NAD kinase</fullName>
        <ecNumber evidence="1">2.7.1.23</ecNumber>
    </recommendedName>
    <alternativeName>
        <fullName evidence="1">ATP-dependent NAD kinase</fullName>
    </alternativeName>
</protein>
<gene>
    <name evidence="1" type="primary">nadK</name>
    <name type="ordered locus">GFO_0215</name>
</gene>
<dbReference type="EC" id="2.7.1.23" evidence="1"/>
<dbReference type="EMBL" id="CU207366">
    <property type="protein sequence ID" value="CAL65203.1"/>
    <property type="molecule type" value="Genomic_DNA"/>
</dbReference>
<dbReference type="RefSeq" id="WP_011708141.1">
    <property type="nucleotide sequence ID" value="NC_008571.1"/>
</dbReference>
<dbReference type="SMR" id="A0LXV8"/>
<dbReference type="STRING" id="411154.GFO_0215"/>
<dbReference type="KEGG" id="gfo:GFO_0215"/>
<dbReference type="eggNOG" id="COG0061">
    <property type="taxonomic scope" value="Bacteria"/>
</dbReference>
<dbReference type="HOGENOM" id="CLU_008831_0_3_10"/>
<dbReference type="OrthoDB" id="9774737at2"/>
<dbReference type="Proteomes" id="UP000000755">
    <property type="component" value="Chromosome"/>
</dbReference>
<dbReference type="GO" id="GO:0005737">
    <property type="term" value="C:cytoplasm"/>
    <property type="evidence" value="ECO:0007669"/>
    <property type="project" value="UniProtKB-SubCell"/>
</dbReference>
<dbReference type="GO" id="GO:0005524">
    <property type="term" value="F:ATP binding"/>
    <property type="evidence" value="ECO:0007669"/>
    <property type="project" value="UniProtKB-KW"/>
</dbReference>
<dbReference type="GO" id="GO:0046872">
    <property type="term" value="F:metal ion binding"/>
    <property type="evidence" value="ECO:0007669"/>
    <property type="project" value="UniProtKB-UniRule"/>
</dbReference>
<dbReference type="GO" id="GO:0051287">
    <property type="term" value="F:NAD binding"/>
    <property type="evidence" value="ECO:0007669"/>
    <property type="project" value="UniProtKB-ARBA"/>
</dbReference>
<dbReference type="GO" id="GO:0003951">
    <property type="term" value="F:NAD+ kinase activity"/>
    <property type="evidence" value="ECO:0007669"/>
    <property type="project" value="UniProtKB-UniRule"/>
</dbReference>
<dbReference type="GO" id="GO:0019674">
    <property type="term" value="P:NAD metabolic process"/>
    <property type="evidence" value="ECO:0007669"/>
    <property type="project" value="InterPro"/>
</dbReference>
<dbReference type="GO" id="GO:0006741">
    <property type="term" value="P:NADP biosynthetic process"/>
    <property type="evidence" value="ECO:0007669"/>
    <property type="project" value="UniProtKB-UniRule"/>
</dbReference>
<dbReference type="Gene3D" id="3.40.50.10330">
    <property type="entry name" value="Probable inorganic polyphosphate/atp-NAD kinase, domain 1"/>
    <property type="match status" value="1"/>
</dbReference>
<dbReference type="Gene3D" id="2.60.200.30">
    <property type="entry name" value="Probable inorganic polyphosphate/atp-NAD kinase, domain 2"/>
    <property type="match status" value="1"/>
</dbReference>
<dbReference type="HAMAP" id="MF_00361">
    <property type="entry name" value="NAD_kinase"/>
    <property type="match status" value="1"/>
</dbReference>
<dbReference type="InterPro" id="IPR017438">
    <property type="entry name" value="ATP-NAD_kinase_N"/>
</dbReference>
<dbReference type="InterPro" id="IPR017437">
    <property type="entry name" value="ATP-NAD_kinase_PpnK-typ_C"/>
</dbReference>
<dbReference type="InterPro" id="IPR016064">
    <property type="entry name" value="NAD/diacylglycerol_kinase_sf"/>
</dbReference>
<dbReference type="InterPro" id="IPR002504">
    <property type="entry name" value="NADK"/>
</dbReference>
<dbReference type="NCBIfam" id="NF002521">
    <property type="entry name" value="PRK01911.1"/>
    <property type="match status" value="1"/>
</dbReference>
<dbReference type="PANTHER" id="PTHR20275">
    <property type="entry name" value="NAD KINASE"/>
    <property type="match status" value="1"/>
</dbReference>
<dbReference type="PANTHER" id="PTHR20275:SF6">
    <property type="entry name" value="NAD KINASE 2, CHLOROPLASTIC"/>
    <property type="match status" value="1"/>
</dbReference>
<dbReference type="Pfam" id="PF01513">
    <property type="entry name" value="NAD_kinase"/>
    <property type="match status" value="1"/>
</dbReference>
<dbReference type="Pfam" id="PF20143">
    <property type="entry name" value="NAD_kinase_C"/>
    <property type="match status" value="1"/>
</dbReference>
<dbReference type="SUPFAM" id="SSF111331">
    <property type="entry name" value="NAD kinase/diacylglycerol kinase-like"/>
    <property type="match status" value="1"/>
</dbReference>
<reference key="1">
    <citation type="journal article" date="2006" name="Environ. Microbiol.">
        <title>Whole genome analysis of the marine Bacteroidetes'Gramella forsetii' reveals adaptations to degradation of polymeric organic matter.</title>
        <authorList>
            <person name="Bauer M."/>
            <person name="Kube M."/>
            <person name="Teeling H."/>
            <person name="Richter M."/>
            <person name="Lombardot T."/>
            <person name="Allers E."/>
            <person name="Wuerdemann C.A."/>
            <person name="Quast C."/>
            <person name="Kuhl H."/>
            <person name="Knaust F."/>
            <person name="Woebken D."/>
            <person name="Bischof K."/>
            <person name="Mussmann M."/>
            <person name="Choudhuri J.V."/>
            <person name="Meyer F."/>
            <person name="Reinhardt R."/>
            <person name="Amann R.I."/>
            <person name="Gloeckner F.O."/>
        </authorList>
    </citation>
    <scope>NUCLEOTIDE SEQUENCE [LARGE SCALE GENOMIC DNA]</scope>
    <source>
        <strain>DSM 17595 / CGMCC 1.15422 / KT0803</strain>
    </source>
</reference>
<name>NADK_CHRFK</name>
<feature type="chain" id="PRO_1000059868" description="NAD kinase">
    <location>
        <begin position="1"/>
        <end position="294"/>
    </location>
</feature>
<feature type="active site" description="Proton acceptor" evidence="1">
    <location>
        <position position="74"/>
    </location>
</feature>
<feature type="binding site" evidence="1">
    <location>
        <begin position="74"/>
        <end position="75"/>
    </location>
    <ligand>
        <name>NAD(+)</name>
        <dbReference type="ChEBI" id="CHEBI:57540"/>
    </ligand>
</feature>
<feature type="binding site" evidence="1">
    <location>
        <position position="79"/>
    </location>
    <ligand>
        <name>NAD(+)</name>
        <dbReference type="ChEBI" id="CHEBI:57540"/>
    </ligand>
</feature>
<feature type="binding site" evidence="1">
    <location>
        <begin position="149"/>
        <end position="150"/>
    </location>
    <ligand>
        <name>NAD(+)</name>
        <dbReference type="ChEBI" id="CHEBI:57540"/>
    </ligand>
</feature>
<feature type="binding site" evidence="1">
    <location>
        <position position="179"/>
    </location>
    <ligand>
        <name>NAD(+)</name>
        <dbReference type="ChEBI" id="CHEBI:57540"/>
    </ligand>
</feature>
<feature type="binding site" evidence="1">
    <location>
        <begin position="190"/>
        <end position="195"/>
    </location>
    <ligand>
        <name>NAD(+)</name>
        <dbReference type="ChEBI" id="CHEBI:57540"/>
    </ligand>
</feature>
<feature type="binding site" evidence="1">
    <location>
        <position position="214"/>
    </location>
    <ligand>
        <name>NAD(+)</name>
        <dbReference type="ChEBI" id="CHEBI:57540"/>
    </ligand>
</feature>
<sequence length="294" mass="33126">MKIGIYGQFYHANAAQYIGQLLELLDQRNIEVLIEEDFLKLIHSNNKIEKDYKHFSAFEELDNSFDLFFCIGGDGTILKSINYIRNLDIPIVGINTGRLGFLATIQKEQIESTLEELLEKKFSLSPRSVLTMQTNPRSYDPVFSHIALNEIAVSRKNTTSMITVDTWLDDQYLTSYWADGLIISTPTGSTGYSLSCGGPVITPDADSLVITPIAPHNLNARPLVIKDHTTIKLKVSGRGKEHLVSMDSRIATLQNDTEIIIKKAPYTINFVELQGDSFLNTLRKKLLWGEDKRN</sequence>
<proteinExistence type="inferred from homology"/>
<keyword id="KW-0067">ATP-binding</keyword>
<keyword id="KW-0963">Cytoplasm</keyword>
<keyword id="KW-0418">Kinase</keyword>
<keyword id="KW-0520">NAD</keyword>
<keyword id="KW-0521">NADP</keyword>
<keyword id="KW-0547">Nucleotide-binding</keyword>
<keyword id="KW-0808">Transferase</keyword>
<evidence type="ECO:0000255" key="1">
    <source>
        <dbReference type="HAMAP-Rule" id="MF_00361"/>
    </source>
</evidence>